<protein>
    <recommendedName>
        <fullName evidence="1">Ribonuclease 3</fullName>
        <ecNumber evidence="1">3.1.26.3</ecNumber>
    </recommendedName>
    <alternativeName>
        <fullName evidence="1">Ribonuclease III</fullName>
        <shortName evidence="1">RNase III</shortName>
    </alternativeName>
</protein>
<comment type="function">
    <text evidence="1">Digests double-stranded RNA. Involved in the processing of primary rRNA transcript to yield the immediate precursors to the large and small rRNAs (23S and 16S). Processes some mRNAs, and tRNAs when they are encoded in the rRNA operon. Processes pre-crRNA and tracrRNA of type II CRISPR loci if present in the organism.</text>
</comment>
<comment type="catalytic activity">
    <reaction evidence="1">
        <text>Endonucleolytic cleavage to 5'-phosphomonoester.</text>
        <dbReference type="EC" id="3.1.26.3"/>
    </reaction>
</comment>
<comment type="cofactor">
    <cofactor evidence="1">
        <name>Mg(2+)</name>
        <dbReference type="ChEBI" id="CHEBI:18420"/>
    </cofactor>
</comment>
<comment type="subunit">
    <text evidence="1">Homodimer.</text>
</comment>
<comment type="subcellular location">
    <subcellularLocation>
        <location evidence="1">Cytoplasm</location>
    </subcellularLocation>
</comment>
<comment type="similarity">
    <text evidence="1">Belongs to the ribonuclease III family.</text>
</comment>
<dbReference type="EC" id="3.1.26.3" evidence="1"/>
<dbReference type="EMBL" id="CU469464">
    <property type="protein sequence ID" value="CAP18239.1"/>
    <property type="molecule type" value="Genomic_DNA"/>
</dbReference>
<dbReference type="SMR" id="B3R075"/>
<dbReference type="STRING" id="37692.ATP_00052"/>
<dbReference type="KEGG" id="pml:ATP_00052"/>
<dbReference type="eggNOG" id="COG0571">
    <property type="taxonomic scope" value="Bacteria"/>
</dbReference>
<dbReference type="HOGENOM" id="CLU_000907_1_3_14"/>
<dbReference type="Proteomes" id="UP000002020">
    <property type="component" value="Chromosome"/>
</dbReference>
<dbReference type="GO" id="GO:0005737">
    <property type="term" value="C:cytoplasm"/>
    <property type="evidence" value="ECO:0007669"/>
    <property type="project" value="UniProtKB-SubCell"/>
</dbReference>
<dbReference type="GO" id="GO:0003725">
    <property type="term" value="F:double-stranded RNA binding"/>
    <property type="evidence" value="ECO:0007669"/>
    <property type="project" value="TreeGrafter"/>
</dbReference>
<dbReference type="GO" id="GO:0046872">
    <property type="term" value="F:metal ion binding"/>
    <property type="evidence" value="ECO:0007669"/>
    <property type="project" value="UniProtKB-KW"/>
</dbReference>
<dbReference type="GO" id="GO:0004525">
    <property type="term" value="F:ribonuclease III activity"/>
    <property type="evidence" value="ECO:0007669"/>
    <property type="project" value="UniProtKB-UniRule"/>
</dbReference>
<dbReference type="GO" id="GO:0019843">
    <property type="term" value="F:rRNA binding"/>
    <property type="evidence" value="ECO:0007669"/>
    <property type="project" value="UniProtKB-KW"/>
</dbReference>
<dbReference type="GO" id="GO:0006397">
    <property type="term" value="P:mRNA processing"/>
    <property type="evidence" value="ECO:0007669"/>
    <property type="project" value="UniProtKB-UniRule"/>
</dbReference>
<dbReference type="GO" id="GO:0010468">
    <property type="term" value="P:regulation of gene expression"/>
    <property type="evidence" value="ECO:0007669"/>
    <property type="project" value="TreeGrafter"/>
</dbReference>
<dbReference type="GO" id="GO:0006364">
    <property type="term" value="P:rRNA processing"/>
    <property type="evidence" value="ECO:0007669"/>
    <property type="project" value="UniProtKB-UniRule"/>
</dbReference>
<dbReference type="GO" id="GO:0008033">
    <property type="term" value="P:tRNA processing"/>
    <property type="evidence" value="ECO:0007669"/>
    <property type="project" value="UniProtKB-KW"/>
</dbReference>
<dbReference type="CDD" id="cd10845">
    <property type="entry name" value="DSRM_RNAse_III_family"/>
    <property type="match status" value="1"/>
</dbReference>
<dbReference type="CDD" id="cd00593">
    <property type="entry name" value="RIBOc"/>
    <property type="match status" value="1"/>
</dbReference>
<dbReference type="FunFam" id="1.10.1520.10:FF:000001">
    <property type="entry name" value="Ribonuclease 3"/>
    <property type="match status" value="1"/>
</dbReference>
<dbReference type="Gene3D" id="3.30.160.20">
    <property type="match status" value="1"/>
</dbReference>
<dbReference type="Gene3D" id="1.10.1520.10">
    <property type="entry name" value="Ribonuclease III domain"/>
    <property type="match status" value="1"/>
</dbReference>
<dbReference type="HAMAP" id="MF_00104">
    <property type="entry name" value="RNase_III"/>
    <property type="match status" value="1"/>
</dbReference>
<dbReference type="InterPro" id="IPR014720">
    <property type="entry name" value="dsRBD_dom"/>
</dbReference>
<dbReference type="InterPro" id="IPR011907">
    <property type="entry name" value="RNase_III"/>
</dbReference>
<dbReference type="InterPro" id="IPR000999">
    <property type="entry name" value="RNase_III_dom"/>
</dbReference>
<dbReference type="InterPro" id="IPR036389">
    <property type="entry name" value="RNase_III_sf"/>
</dbReference>
<dbReference type="NCBIfam" id="TIGR02191">
    <property type="entry name" value="RNaseIII"/>
    <property type="match status" value="1"/>
</dbReference>
<dbReference type="PANTHER" id="PTHR11207:SF0">
    <property type="entry name" value="RIBONUCLEASE 3"/>
    <property type="match status" value="1"/>
</dbReference>
<dbReference type="PANTHER" id="PTHR11207">
    <property type="entry name" value="RIBONUCLEASE III"/>
    <property type="match status" value="1"/>
</dbReference>
<dbReference type="Pfam" id="PF00035">
    <property type="entry name" value="dsrm"/>
    <property type="match status" value="1"/>
</dbReference>
<dbReference type="Pfam" id="PF14622">
    <property type="entry name" value="Ribonucleas_3_3"/>
    <property type="match status" value="1"/>
</dbReference>
<dbReference type="SMART" id="SM00358">
    <property type="entry name" value="DSRM"/>
    <property type="match status" value="1"/>
</dbReference>
<dbReference type="SMART" id="SM00535">
    <property type="entry name" value="RIBOc"/>
    <property type="match status" value="1"/>
</dbReference>
<dbReference type="SUPFAM" id="SSF54768">
    <property type="entry name" value="dsRNA-binding domain-like"/>
    <property type="match status" value="1"/>
</dbReference>
<dbReference type="SUPFAM" id="SSF69065">
    <property type="entry name" value="RNase III domain-like"/>
    <property type="match status" value="1"/>
</dbReference>
<dbReference type="PROSITE" id="PS50137">
    <property type="entry name" value="DS_RBD"/>
    <property type="match status" value="1"/>
</dbReference>
<dbReference type="PROSITE" id="PS00517">
    <property type="entry name" value="RNASE_3_1"/>
    <property type="match status" value="1"/>
</dbReference>
<dbReference type="PROSITE" id="PS50142">
    <property type="entry name" value="RNASE_3_2"/>
    <property type="match status" value="1"/>
</dbReference>
<reference key="1">
    <citation type="journal article" date="2008" name="BMC Genomics">
        <title>The linear chromosome of the plant-pathogenic mycoplasma 'Candidatus Phytoplasma mali'.</title>
        <authorList>
            <person name="Kube M."/>
            <person name="Schneider B."/>
            <person name="Kuhl H."/>
            <person name="Dandekar T."/>
            <person name="Heitmann K."/>
            <person name="Migdoll A.M."/>
            <person name="Reinhardt R."/>
            <person name="Seemueller E."/>
        </authorList>
    </citation>
    <scope>NUCLEOTIDE SEQUENCE [LARGE SCALE GENOMIC DNA]</scope>
    <source>
        <strain>AT</strain>
    </source>
</reference>
<gene>
    <name evidence="1" type="primary">rnc</name>
    <name type="ordered locus">ATP_00052</name>
</gene>
<feature type="chain" id="PRO_1000202841" description="Ribonuclease 3">
    <location>
        <begin position="1"/>
        <end position="225"/>
    </location>
</feature>
<feature type="domain" description="RNase III" evidence="1">
    <location>
        <begin position="2"/>
        <end position="128"/>
    </location>
</feature>
<feature type="domain" description="DRBM" evidence="1">
    <location>
        <begin position="152"/>
        <end position="220"/>
    </location>
</feature>
<feature type="active site" evidence="1">
    <location>
        <position position="47"/>
    </location>
</feature>
<feature type="active site" evidence="1">
    <location>
        <position position="117"/>
    </location>
</feature>
<feature type="binding site" evidence="1">
    <location>
        <position position="43"/>
    </location>
    <ligand>
        <name>Mg(2+)</name>
        <dbReference type="ChEBI" id="CHEBI:18420"/>
    </ligand>
</feature>
<feature type="binding site" evidence="1">
    <location>
        <position position="114"/>
    </location>
    <ligand>
        <name>Mg(2+)</name>
        <dbReference type="ChEBI" id="CHEBI:18420"/>
    </ligand>
</feature>
<feature type="binding site" evidence="1">
    <location>
        <position position="117"/>
    </location>
    <ligand>
        <name>Mg(2+)</name>
        <dbReference type="ChEBI" id="CHEBI:18420"/>
    </ligand>
</feature>
<accession>B3R075</accession>
<organism>
    <name type="scientific">Phytoplasma mali (strain AT)</name>
    <dbReference type="NCBI Taxonomy" id="482235"/>
    <lineage>
        <taxon>Bacteria</taxon>
        <taxon>Bacillati</taxon>
        <taxon>Mycoplasmatota</taxon>
        <taxon>Mollicutes</taxon>
        <taxon>Acholeplasmatales</taxon>
        <taxon>Acholeplasmataceae</taxon>
        <taxon>Candidatus Phytoplasma</taxon>
        <taxon>16SrX (Apple proliferation group)</taxon>
    </lineage>
</organism>
<name>RNC_PHYMT</name>
<proteinExistence type="inferred from homology"/>
<evidence type="ECO:0000255" key="1">
    <source>
        <dbReference type="HAMAP-Rule" id="MF_00104"/>
    </source>
</evidence>
<sequence>MLSTLIKKLKIKPKQISLYKMSITHSSYANENKLKKKDNERLEFLGDAVINLLMADYLYTKKEKENEGFMSKKRAQSVCEDSLVIYAKSIQLQNYILLGKGEKNKNINNSILANAFEALFGAIYLDLGYYIAKKVFILIVIPRLSNIIDNIDFKTQLQELVQSQKKTISYYITEEKGLDHSKEFTAEVFLEKKNVGRGFGKTKKSAEQDAARYVLNILSKGEKND</sequence>
<keyword id="KW-0963">Cytoplasm</keyword>
<keyword id="KW-0255">Endonuclease</keyword>
<keyword id="KW-0378">Hydrolase</keyword>
<keyword id="KW-0460">Magnesium</keyword>
<keyword id="KW-0479">Metal-binding</keyword>
<keyword id="KW-0507">mRNA processing</keyword>
<keyword id="KW-0540">Nuclease</keyword>
<keyword id="KW-1185">Reference proteome</keyword>
<keyword id="KW-0694">RNA-binding</keyword>
<keyword id="KW-0698">rRNA processing</keyword>
<keyword id="KW-0699">rRNA-binding</keyword>
<keyword id="KW-0819">tRNA processing</keyword>